<proteinExistence type="predicted"/>
<comment type="subcellular location">
    <subcellularLocation>
        <location evidence="2">Cell membrane</location>
        <topology evidence="2">Multi-pass membrane protein</topology>
    </subcellularLocation>
</comment>
<comment type="sequence caution" evidence="2">
    <conflict type="erroneous initiation">
        <sequence resource="EMBL-CDS" id="AAN78964"/>
    </conflict>
</comment>
<keyword id="KW-1003">Cell membrane</keyword>
<keyword id="KW-0472">Membrane</keyword>
<keyword id="KW-1185">Reference proteome</keyword>
<keyword id="KW-0812">Transmembrane</keyword>
<keyword id="KW-1133">Transmembrane helix</keyword>
<reference key="1">
    <citation type="journal article" date="2002" name="Proc. Natl. Acad. Sci. U.S.A.">
        <title>Extensive mosaic structure revealed by the complete genome sequence of uropathogenic Escherichia coli.</title>
        <authorList>
            <person name="Welch R.A."/>
            <person name="Burland V."/>
            <person name="Plunkett G. III"/>
            <person name="Redford P."/>
            <person name="Roesch P."/>
            <person name="Rasko D."/>
            <person name="Buckles E.L."/>
            <person name="Liou S.-R."/>
            <person name="Boutin A."/>
            <person name="Hackett J."/>
            <person name="Stroud D."/>
            <person name="Mayhew G.F."/>
            <person name="Rose D.J."/>
            <person name="Zhou S."/>
            <person name="Schwartz D.C."/>
            <person name="Perna N.T."/>
            <person name="Mobley H.L.T."/>
            <person name="Donnenberg M.S."/>
            <person name="Blattner F.R."/>
        </authorList>
    </citation>
    <scope>NUCLEOTIDE SEQUENCE [LARGE SCALE GENOMIC DNA]</scope>
    <source>
        <strain>CFT073 / ATCC 700928 / UPEC</strain>
    </source>
</reference>
<dbReference type="EMBL" id="AE014075">
    <property type="protein sequence ID" value="AAN78964.1"/>
    <property type="status" value="ALT_INIT"/>
    <property type="molecule type" value="Genomic_DNA"/>
</dbReference>
<dbReference type="RefSeq" id="WP_001295334.1">
    <property type="nucleotide sequence ID" value="NZ_CP051263.1"/>
</dbReference>
<dbReference type="SMR" id="P0AAQ1"/>
<dbReference type="STRING" id="199310.c0486"/>
<dbReference type="KEGG" id="ecc:c0486"/>
<dbReference type="eggNOG" id="ENOG5032T5P">
    <property type="taxonomic scope" value="Bacteria"/>
</dbReference>
<dbReference type="HOGENOM" id="CLU_2119459_0_0_6"/>
<dbReference type="Proteomes" id="UP000001410">
    <property type="component" value="Chromosome"/>
</dbReference>
<dbReference type="GO" id="GO:0005886">
    <property type="term" value="C:plasma membrane"/>
    <property type="evidence" value="ECO:0007669"/>
    <property type="project" value="UniProtKB-SubCell"/>
</dbReference>
<dbReference type="InterPro" id="IPR020490">
    <property type="entry name" value="Uncharacterised_YaiZ"/>
</dbReference>
<dbReference type="Pfam" id="PF10953">
    <property type="entry name" value="DUF2754"/>
    <property type="match status" value="1"/>
</dbReference>
<feature type="chain" id="PRO_0000168603" description="Uncharacterized protein YaiZ">
    <location>
        <begin position="1"/>
        <end position="70"/>
    </location>
</feature>
<feature type="transmembrane region" description="Helical" evidence="1">
    <location>
        <begin position="13"/>
        <end position="33"/>
    </location>
</feature>
<feature type="transmembrane region" description="Helical" evidence="1">
    <location>
        <begin position="39"/>
        <end position="59"/>
    </location>
</feature>
<evidence type="ECO:0000255" key="1"/>
<evidence type="ECO:0000305" key="2"/>
<protein>
    <recommendedName>
        <fullName>Uncharacterized protein YaiZ</fullName>
    </recommendedName>
</protein>
<sequence length="70" mass="8097">MNLPVKIRRDWHYYAFAIGLIFILNGVVGLLGFEAKGWQTYAVGLVTWVISFWLAGLIIRRRDEETENAQ</sequence>
<accession>P0AAQ1</accession>
<accession>P77273</accession>
<gene>
    <name type="primary">yaiZ</name>
    <name type="ordered locus">c0486</name>
</gene>
<organism>
    <name type="scientific">Escherichia coli O6:H1 (strain CFT073 / ATCC 700928 / UPEC)</name>
    <dbReference type="NCBI Taxonomy" id="199310"/>
    <lineage>
        <taxon>Bacteria</taxon>
        <taxon>Pseudomonadati</taxon>
        <taxon>Pseudomonadota</taxon>
        <taxon>Gammaproteobacteria</taxon>
        <taxon>Enterobacterales</taxon>
        <taxon>Enterobacteriaceae</taxon>
        <taxon>Escherichia</taxon>
    </lineage>
</organism>
<name>YAIZ_ECOL6</name>